<feature type="chain" id="PRO_0000255056" description="Cytochrome b">
    <location>
        <begin position="1"/>
        <end position="379"/>
    </location>
</feature>
<feature type="transmembrane region" description="Helical" evidence="2">
    <location>
        <begin position="33"/>
        <end position="53"/>
    </location>
</feature>
<feature type="transmembrane region" description="Helical" evidence="2">
    <location>
        <begin position="77"/>
        <end position="98"/>
    </location>
</feature>
<feature type="transmembrane region" description="Helical" evidence="2">
    <location>
        <begin position="113"/>
        <end position="133"/>
    </location>
</feature>
<feature type="transmembrane region" description="Helical" evidence="2">
    <location>
        <begin position="178"/>
        <end position="198"/>
    </location>
</feature>
<feature type="transmembrane region" description="Helical" evidence="2">
    <location>
        <begin position="226"/>
        <end position="246"/>
    </location>
</feature>
<feature type="transmembrane region" description="Helical" evidence="2">
    <location>
        <begin position="288"/>
        <end position="308"/>
    </location>
</feature>
<feature type="transmembrane region" description="Helical" evidence="2">
    <location>
        <begin position="320"/>
        <end position="340"/>
    </location>
</feature>
<feature type="transmembrane region" description="Helical" evidence="2">
    <location>
        <begin position="347"/>
        <end position="367"/>
    </location>
</feature>
<feature type="binding site" description="axial binding residue" evidence="2">
    <location>
        <position position="83"/>
    </location>
    <ligand>
        <name>heme b</name>
        <dbReference type="ChEBI" id="CHEBI:60344"/>
        <label>b562</label>
    </ligand>
    <ligandPart>
        <name>Fe</name>
        <dbReference type="ChEBI" id="CHEBI:18248"/>
    </ligandPart>
</feature>
<feature type="binding site" description="axial binding residue" evidence="2">
    <location>
        <position position="97"/>
    </location>
    <ligand>
        <name>heme b</name>
        <dbReference type="ChEBI" id="CHEBI:60344"/>
        <label>b566</label>
    </ligand>
    <ligandPart>
        <name>Fe</name>
        <dbReference type="ChEBI" id="CHEBI:18248"/>
    </ligandPart>
</feature>
<feature type="binding site" description="axial binding residue" evidence="2">
    <location>
        <position position="182"/>
    </location>
    <ligand>
        <name>heme b</name>
        <dbReference type="ChEBI" id="CHEBI:60344"/>
        <label>b562</label>
    </ligand>
    <ligandPart>
        <name>Fe</name>
        <dbReference type="ChEBI" id="CHEBI:18248"/>
    </ligandPart>
</feature>
<feature type="binding site" description="axial binding residue" evidence="2">
    <location>
        <position position="196"/>
    </location>
    <ligand>
        <name>heme b</name>
        <dbReference type="ChEBI" id="CHEBI:60344"/>
        <label>b566</label>
    </ligand>
    <ligandPart>
        <name>Fe</name>
        <dbReference type="ChEBI" id="CHEBI:18248"/>
    </ligandPart>
</feature>
<feature type="binding site" evidence="2">
    <location>
        <position position="201"/>
    </location>
    <ligand>
        <name>a ubiquinone</name>
        <dbReference type="ChEBI" id="CHEBI:16389"/>
    </ligand>
</feature>
<gene>
    <name type="primary">MT-CYB</name>
    <name type="synonym">COB</name>
    <name type="synonym">CYTB</name>
    <name type="synonym">MTCYB</name>
</gene>
<dbReference type="EMBL" id="AY393935">
    <property type="protein sequence ID" value="AAR84508.1"/>
    <property type="molecule type" value="Genomic_DNA"/>
</dbReference>
<dbReference type="SMR" id="Q5YJ93"/>
<dbReference type="GO" id="GO:0005743">
    <property type="term" value="C:mitochondrial inner membrane"/>
    <property type="evidence" value="ECO:0007669"/>
    <property type="project" value="UniProtKB-SubCell"/>
</dbReference>
<dbReference type="GO" id="GO:0045275">
    <property type="term" value="C:respiratory chain complex III"/>
    <property type="evidence" value="ECO:0007669"/>
    <property type="project" value="InterPro"/>
</dbReference>
<dbReference type="GO" id="GO:0046872">
    <property type="term" value="F:metal ion binding"/>
    <property type="evidence" value="ECO:0007669"/>
    <property type="project" value="UniProtKB-KW"/>
</dbReference>
<dbReference type="GO" id="GO:0008121">
    <property type="term" value="F:ubiquinol-cytochrome-c reductase activity"/>
    <property type="evidence" value="ECO:0007669"/>
    <property type="project" value="InterPro"/>
</dbReference>
<dbReference type="GO" id="GO:0006122">
    <property type="term" value="P:mitochondrial electron transport, ubiquinol to cytochrome c"/>
    <property type="evidence" value="ECO:0007669"/>
    <property type="project" value="TreeGrafter"/>
</dbReference>
<dbReference type="CDD" id="cd00290">
    <property type="entry name" value="cytochrome_b_C"/>
    <property type="match status" value="1"/>
</dbReference>
<dbReference type="CDD" id="cd00284">
    <property type="entry name" value="Cytochrome_b_N"/>
    <property type="match status" value="1"/>
</dbReference>
<dbReference type="FunFam" id="1.20.810.10:FF:000002">
    <property type="entry name" value="Cytochrome b"/>
    <property type="match status" value="1"/>
</dbReference>
<dbReference type="Gene3D" id="1.20.810.10">
    <property type="entry name" value="Cytochrome Bc1 Complex, Chain C"/>
    <property type="match status" value="1"/>
</dbReference>
<dbReference type="InterPro" id="IPR005798">
    <property type="entry name" value="Cyt_b/b6_C"/>
</dbReference>
<dbReference type="InterPro" id="IPR036150">
    <property type="entry name" value="Cyt_b/b6_C_sf"/>
</dbReference>
<dbReference type="InterPro" id="IPR005797">
    <property type="entry name" value="Cyt_b/b6_N"/>
</dbReference>
<dbReference type="InterPro" id="IPR027387">
    <property type="entry name" value="Cytb/b6-like_sf"/>
</dbReference>
<dbReference type="InterPro" id="IPR030689">
    <property type="entry name" value="Cytochrome_b"/>
</dbReference>
<dbReference type="InterPro" id="IPR048260">
    <property type="entry name" value="Cytochrome_b_C_euk/bac"/>
</dbReference>
<dbReference type="InterPro" id="IPR048259">
    <property type="entry name" value="Cytochrome_b_N_euk/bac"/>
</dbReference>
<dbReference type="InterPro" id="IPR016174">
    <property type="entry name" value="Di-haem_cyt_TM"/>
</dbReference>
<dbReference type="PANTHER" id="PTHR19271">
    <property type="entry name" value="CYTOCHROME B"/>
    <property type="match status" value="1"/>
</dbReference>
<dbReference type="PANTHER" id="PTHR19271:SF16">
    <property type="entry name" value="CYTOCHROME B"/>
    <property type="match status" value="1"/>
</dbReference>
<dbReference type="Pfam" id="PF00032">
    <property type="entry name" value="Cytochrom_B_C"/>
    <property type="match status" value="1"/>
</dbReference>
<dbReference type="Pfam" id="PF00033">
    <property type="entry name" value="Cytochrome_B"/>
    <property type="match status" value="1"/>
</dbReference>
<dbReference type="PIRSF" id="PIRSF038885">
    <property type="entry name" value="COB"/>
    <property type="match status" value="1"/>
</dbReference>
<dbReference type="SUPFAM" id="SSF81648">
    <property type="entry name" value="a domain/subunit of cytochrome bc1 complex (Ubiquinol-cytochrome c reductase)"/>
    <property type="match status" value="1"/>
</dbReference>
<dbReference type="SUPFAM" id="SSF81342">
    <property type="entry name" value="Transmembrane di-heme cytochromes"/>
    <property type="match status" value="1"/>
</dbReference>
<dbReference type="PROSITE" id="PS51003">
    <property type="entry name" value="CYTB_CTER"/>
    <property type="match status" value="1"/>
</dbReference>
<dbReference type="PROSITE" id="PS51002">
    <property type="entry name" value="CYTB_NTER"/>
    <property type="match status" value="1"/>
</dbReference>
<geneLocation type="mitochondrion"/>
<name>CYB_GEOAR</name>
<protein>
    <recommendedName>
        <fullName>Cytochrome b</fullName>
    </recommendedName>
    <alternativeName>
        <fullName>Complex III subunit 3</fullName>
    </alternativeName>
    <alternativeName>
        <fullName>Complex III subunit III</fullName>
    </alternativeName>
    <alternativeName>
        <fullName>Cytochrome b-c1 complex subunit 3</fullName>
    </alternativeName>
    <alternativeName>
        <fullName>Ubiquinol-cytochrome-c reductase complex cytochrome b subunit</fullName>
    </alternativeName>
</protein>
<keyword id="KW-0249">Electron transport</keyword>
<keyword id="KW-0349">Heme</keyword>
<keyword id="KW-0408">Iron</keyword>
<keyword id="KW-0472">Membrane</keyword>
<keyword id="KW-0479">Metal-binding</keyword>
<keyword id="KW-0496">Mitochondrion</keyword>
<keyword id="KW-0999">Mitochondrion inner membrane</keyword>
<keyword id="KW-0679">Respiratory chain</keyword>
<keyword id="KW-0812">Transmembrane</keyword>
<keyword id="KW-1133">Transmembrane helix</keyword>
<keyword id="KW-0813">Transport</keyword>
<keyword id="KW-0830">Ubiquinone</keyword>
<sequence>MAIMRKSHPLMKIINHAFIDLPTPPNISGWWNFGSLLGLCLVLQILTGLFLAMHYTSDTLTAFSSVTHICRDVNYGWLIRYMHANGASLFFICLYIHIGRGIYYGSYLYTETWNIGILLLFLTMATAFVGYVLPWGQTSFWGATVITNLLSTIPYIEQDLVEWIWGGFSVDKATLTRFFAFHFILPFIIAALAMVHLLFLHETGSNNPMGIPSDCGKVPFHPYYTTKDFLGVIMLLMLFLTLVLFFPDKLGDPDNYTPANPLNTPPHIKPEWYFLFAYAILRSIPNKLGGVIALVMSILVLALLPYLHTSKQRSLSFRPLSQTLFWVLVADLLLLTWIGGQPVEPPFIIIGQVASILYFLILLLLMPMAGLIENKLLKW</sequence>
<comment type="function">
    <text evidence="2">Component of the ubiquinol-cytochrome c reductase complex (complex III or cytochrome b-c1 complex) that is part of the mitochondrial respiratory chain. The b-c1 complex mediates electron transfer from ubiquinol to cytochrome c. Contributes to the generation of a proton gradient across the mitochondrial membrane that is then used for ATP synthesis.</text>
</comment>
<comment type="cofactor">
    <cofactor evidence="2">
        <name>heme b</name>
        <dbReference type="ChEBI" id="CHEBI:60344"/>
    </cofactor>
    <text evidence="2">Binds 2 heme b groups non-covalently.</text>
</comment>
<comment type="subunit">
    <text evidence="2">The cytochrome bc1 complex contains 11 subunits: 3 respiratory subunits (MT-CYB, CYC1 and UQCRFS1), 2 core proteins (UQCRC1 and UQCRC2) and 6 low-molecular weight proteins (UQCRH/QCR6, UQCRB/QCR7, UQCRQ/QCR8, UQCR10/QCR9, UQCR11/QCR10 and a cleavage product of UQCRFS1). This cytochrome bc1 complex then forms a dimer.</text>
</comment>
<comment type="subcellular location">
    <subcellularLocation>
        <location evidence="2">Mitochondrion inner membrane</location>
        <topology evidence="2">Multi-pass membrane protein</topology>
    </subcellularLocation>
</comment>
<comment type="miscellaneous">
    <text evidence="1">Heme 1 (or BL or b562) is low-potential and absorbs at about 562 nm, and heme 2 (or BH or b566) is high-potential and absorbs at about 566 nm.</text>
</comment>
<comment type="similarity">
    <text evidence="3 4">Belongs to the cytochrome b family.</text>
</comment>
<comment type="caution">
    <text evidence="2">The full-length protein contains only eight transmembrane helices, not nine as predicted by bioinformatics tools.</text>
</comment>
<evidence type="ECO:0000250" key="1"/>
<evidence type="ECO:0000250" key="2">
    <source>
        <dbReference type="UniProtKB" id="P00157"/>
    </source>
</evidence>
<evidence type="ECO:0000255" key="3">
    <source>
        <dbReference type="PROSITE-ProRule" id="PRU00967"/>
    </source>
</evidence>
<evidence type="ECO:0000255" key="4">
    <source>
        <dbReference type="PROSITE-ProRule" id="PRU00968"/>
    </source>
</evidence>
<reference key="1">
    <citation type="journal article" date="2006" name="J. Mammal.">
        <title>Molecular systematics of pocket gophers of the genus Geomys.</title>
        <authorList>
            <person name="Sudman P.D."/>
            <person name="Wickliffe J.K."/>
            <person name="Horner P."/>
            <person name="Smolen M.J."/>
            <person name="Bickham J.W."/>
            <person name="Bradley R.D."/>
        </authorList>
    </citation>
    <scope>NUCLEOTIDE SEQUENCE [GENOMIC DNA]</scope>
</reference>
<organism>
    <name type="scientific">Geomys arenarius</name>
    <name type="common">Desert pocket gopher</name>
    <dbReference type="NCBI Taxonomy" id="108582"/>
    <lineage>
        <taxon>Eukaryota</taxon>
        <taxon>Metazoa</taxon>
        <taxon>Chordata</taxon>
        <taxon>Craniata</taxon>
        <taxon>Vertebrata</taxon>
        <taxon>Euteleostomi</taxon>
        <taxon>Mammalia</taxon>
        <taxon>Eutheria</taxon>
        <taxon>Euarchontoglires</taxon>
        <taxon>Glires</taxon>
        <taxon>Rodentia</taxon>
        <taxon>Castorimorpha</taxon>
        <taxon>Geomyidae</taxon>
        <taxon>Geomys</taxon>
    </lineage>
</organism>
<proteinExistence type="inferred from homology"/>
<accession>Q5YJ93</accession>